<organism>
    <name type="scientific">Prochlorococcus marinus (strain AS9601)</name>
    <dbReference type="NCBI Taxonomy" id="146891"/>
    <lineage>
        <taxon>Bacteria</taxon>
        <taxon>Bacillati</taxon>
        <taxon>Cyanobacteriota</taxon>
        <taxon>Cyanophyceae</taxon>
        <taxon>Synechococcales</taxon>
        <taxon>Prochlorococcaceae</taxon>
        <taxon>Prochlorococcus</taxon>
    </lineage>
</organism>
<keyword id="KW-0028">Amino-acid biosynthesis</keyword>
<keyword id="KW-0963">Cytoplasm</keyword>
<keyword id="KW-0368">Histidine biosynthesis</keyword>
<keyword id="KW-0456">Lyase</keyword>
<comment type="catalytic activity">
    <reaction evidence="1">
        <text>D-erythro-1-(imidazol-4-yl)glycerol 3-phosphate = 3-(imidazol-4-yl)-2-oxopropyl phosphate + H2O</text>
        <dbReference type="Rhea" id="RHEA:11040"/>
        <dbReference type="ChEBI" id="CHEBI:15377"/>
        <dbReference type="ChEBI" id="CHEBI:57766"/>
        <dbReference type="ChEBI" id="CHEBI:58278"/>
        <dbReference type="EC" id="4.2.1.19"/>
    </reaction>
</comment>
<comment type="pathway">
    <text evidence="1">Amino-acid biosynthesis; L-histidine biosynthesis; L-histidine from 5-phospho-alpha-D-ribose 1-diphosphate: step 6/9.</text>
</comment>
<comment type="subcellular location">
    <subcellularLocation>
        <location evidence="1">Cytoplasm</location>
    </subcellularLocation>
</comment>
<comment type="similarity">
    <text evidence="1">Belongs to the imidazoleglycerol-phosphate dehydratase family.</text>
</comment>
<evidence type="ECO:0000255" key="1">
    <source>
        <dbReference type="HAMAP-Rule" id="MF_00076"/>
    </source>
</evidence>
<gene>
    <name evidence="1" type="primary">hisB</name>
    <name type="ordered locus">A9601_03041</name>
</gene>
<sequence length="201" mass="22417">MSSLRQSEIKRKTNETDISVFINLDGSGISEIDTGIPFLDHMLHQISSHGLFDLQIKAIGDTHIDDHHTNEDVGIALGKAFSKALGERKGISRFGHFFAPLDEALVQVTLDCSGRPHLSYDLQLKAPRIGNYDTELVREFFIAFVNNSGITLHINQIRGSNSHHIVEACFKAFSRAMRMATEIDPRRSDSIPSSKGMLEKQ</sequence>
<dbReference type="EC" id="4.2.1.19" evidence="1"/>
<dbReference type="EMBL" id="CP000551">
    <property type="protein sequence ID" value="ABM69592.1"/>
    <property type="molecule type" value="Genomic_DNA"/>
</dbReference>
<dbReference type="RefSeq" id="WP_011817773.1">
    <property type="nucleotide sequence ID" value="NC_008816.1"/>
</dbReference>
<dbReference type="SMR" id="A2BP81"/>
<dbReference type="STRING" id="146891.A9601_03041"/>
<dbReference type="KEGG" id="pmb:A9601_03041"/>
<dbReference type="eggNOG" id="COG0131">
    <property type="taxonomic scope" value="Bacteria"/>
</dbReference>
<dbReference type="HOGENOM" id="CLU_044308_3_0_3"/>
<dbReference type="OrthoDB" id="9790411at2"/>
<dbReference type="UniPathway" id="UPA00031">
    <property type="reaction ID" value="UER00011"/>
</dbReference>
<dbReference type="Proteomes" id="UP000002590">
    <property type="component" value="Chromosome"/>
</dbReference>
<dbReference type="GO" id="GO:0005737">
    <property type="term" value="C:cytoplasm"/>
    <property type="evidence" value="ECO:0007669"/>
    <property type="project" value="UniProtKB-SubCell"/>
</dbReference>
<dbReference type="GO" id="GO:0004424">
    <property type="term" value="F:imidazoleglycerol-phosphate dehydratase activity"/>
    <property type="evidence" value="ECO:0007669"/>
    <property type="project" value="UniProtKB-UniRule"/>
</dbReference>
<dbReference type="GO" id="GO:0000105">
    <property type="term" value="P:L-histidine biosynthetic process"/>
    <property type="evidence" value="ECO:0007669"/>
    <property type="project" value="UniProtKB-UniRule"/>
</dbReference>
<dbReference type="CDD" id="cd07914">
    <property type="entry name" value="IGPD"/>
    <property type="match status" value="1"/>
</dbReference>
<dbReference type="FunFam" id="3.30.230.40:FF:000002">
    <property type="entry name" value="Imidazoleglycerol-phosphate dehydratase"/>
    <property type="match status" value="1"/>
</dbReference>
<dbReference type="FunFam" id="3.30.230.40:FF:000003">
    <property type="entry name" value="Imidazoleglycerol-phosphate dehydratase HisB"/>
    <property type="match status" value="1"/>
</dbReference>
<dbReference type="Gene3D" id="3.30.230.40">
    <property type="entry name" value="Imidazole glycerol phosphate dehydratase, domain 1"/>
    <property type="match status" value="2"/>
</dbReference>
<dbReference type="HAMAP" id="MF_00076">
    <property type="entry name" value="HisB"/>
    <property type="match status" value="1"/>
</dbReference>
<dbReference type="InterPro" id="IPR038494">
    <property type="entry name" value="IGPD_sf"/>
</dbReference>
<dbReference type="InterPro" id="IPR000807">
    <property type="entry name" value="ImidazoleglycerolP_deHydtase"/>
</dbReference>
<dbReference type="InterPro" id="IPR020565">
    <property type="entry name" value="ImidazoleglycerP_deHydtase_CS"/>
</dbReference>
<dbReference type="InterPro" id="IPR020568">
    <property type="entry name" value="Ribosomal_Su5_D2-typ_SF"/>
</dbReference>
<dbReference type="NCBIfam" id="NF002106">
    <property type="entry name" value="PRK00951.1-1"/>
    <property type="match status" value="1"/>
</dbReference>
<dbReference type="NCBIfam" id="NF002108">
    <property type="entry name" value="PRK00951.1-3"/>
    <property type="match status" value="1"/>
</dbReference>
<dbReference type="NCBIfam" id="NF002109">
    <property type="entry name" value="PRK00951.1-5"/>
    <property type="match status" value="1"/>
</dbReference>
<dbReference type="NCBIfam" id="NF002111">
    <property type="entry name" value="PRK00951.2-1"/>
    <property type="match status" value="1"/>
</dbReference>
<dbReference type="NCBIfam" id="NF002114">
    <property type="entry name" value="PRK00951.2-4"/>
    <property type="match status" value="1"/>
</dbReference>
<dbReference type="PANTHER" id="PTHR23133:SF2">
    <property type="entry name" value="IMIDAZOLEGLYCEROL-PHOSPHATE DEHYDRATASE"/>
    <property type="match status" value="1"/>
</dbReference>
<dbReference type="PANTHER" id="PTHR23133">
    <property type="entry name" value="IMIDAZOLEGLYCEROL-PHOSPHATE DEHYDRATASE HIS7"/>
    <property type="match status" value="1"/>
</dbReference>
<dbReference type="Pfam" id="PF00475">
    <property type="entry name" value="IGPD"/>
    <property type="match status" value="1"/>
</dbReference>
<dbReference type="SUPFAM" id="SSF54211">
    <property type="entry name" value="Ribosomal protein S5 domain 2-like"/>
    <property type="match status" value="2"/>
</dbReference>
<dbReference type="PROSITE" id="PS00954">
    <property type="entry name" value="IGP_DEHYDRATASE_1"/>
    <property type="match status" value="1"/>
</dbReference>
<dbReference type="PROSITE" id="PS00955">
    <property type="entry name" value="IGP_DEHYDRATASE_2"/>
    <property type="match status" value="1"/>
</dbReference>
<reference key="1">
    <citation type="journal article" date="2007" name="PLoS Genet.">
        <title>Patterns and implications of gene gain and loss in the evolution of Prochlorococcus.</title>
        <authorList>
            <person name="Kettler G.C."/>
            <person name="Martiny A.C."/>
            <person name="Huang K."/>
            <person name="Zucker J."/>
            <person name="Coleman M.L."/>
            <person name="Rodrigue S."/>
            <person name="Chen F."/>
            <person name="Lapidus A."/>
            <person name="Ferriera S."/>
            <person name="Johnson J."/>
            <person name="Steglich C."/>
            <person name="Church G.M."/>
            <person name="Richardson P."/>
            <person name="Chisholm S.W."/>
        </authorList>
    </citation>
    <scope>NUCLEOTIDE SEQUENCE [LARGE SCALE GENOMIC DNA]</scope>
    <source>
        <strain>AS9601</strain>
    </source>
</reference>
<name>HIS7_PROMS</name>
<feature type="chain" id="PRO_1000010326" description="Imidazoleglycerol-phosphate dehydratase">
    <location>
        <begin position="1"/>
        <end position="201"/>
    </location>
</feature>
<protein>
    <recommendedName>
        <fullName evidence="1">Imidazoleglycerol-phosphate dehydratase</fullName>
        <shortName evidence="1">IGPD</shortName>
        <ecNumber evidence="1">4.2.1.19</ecNumber>
    </recommendedName>
</protein>
<accession>A2BP81</accession>
<proteinExistence type="inferred from homology"/>